<name>HEM0_PONAB</name>
<keyword id="KW-0012">Acyltransferase</keyword>
<keyword id="KW-0350">Heme biosynthesis</keyword>
<keyword id="KW-0472">Membrane</keyword>
<keyword id="KW-0496">Mitochondrion</keyword>
<keyword id="KW-0999">Mitochondrion inner membrane</keyword>
<keyword id="KW-0663">Pyridoxal phosphate</keyword>
<keyword id="KW-1185">Reference proteome</keyword>
<keyword id="KW-0808">Transferase</keyword>
<keyword id="KW-0809">Transit peptide</keyword>
<feature type="transit peptide" description="Mitochondrion" evidence="3">
    <location>
        <begin position="1"/>
        <end position="49"/>
    </location>
</feature>
<feature type="chain" id="PRO_0000290199" description="5-aminolevulinate synthase, erythroid-specific, mitochondrial">
    <location>
        <begin position="50"/>
        <end position="587"/>
    </location>
</feature>
<feature type="active site" evidence="2">
    <location>
        <position position="391"/>
    </location>
</feature>
<feature type="binding site" evidence="2">
    <location>
        <position position="163"/>
    </location>
    <ligand>
        <name>succinyl-CoA</name>
        <dbReference type="ChEBI" id="CHEBI:57292"/>
    </ligand>
</feature>
<feature type="binding site" description="in other chain" evidence="3">
    <location>
        <position position="258"/>
    </location>
    <ligand>
        <name>pyridoxal 5'-phosphate</name>
        <dbReference type="ChEBI" id="CHEBI:597326"/>
        <note>ligand shared between dimeric partners</note>
    </ligand>
</feature>
<feature type="binding site" description="in other chain" evidence="3">
    <location>
        <position position="259"/>
    </location>
    <ligand>
        <name>pyridoxal 5'-phosphate</name>
        <dbReference type="ChEBI" id="CHEBI:597326"/>
        <note>ligand shared between dimeric partners</note>
    </ligand>
</feature>
<feature type="binding site" evidence="2">
    <location>
        <position position="280"/>
    </location>
    <ligand>
        <name>succinyl-CoA</name>
        <dbReference type="ChEBI" id="CHEBI:57292"/>
    </ligand>
</feature>
<feature type="binding site" evidence="2">
    <location>
        <position position="299"/>
    </location>
    <ligand>
        <name>succinyl-CoA</name>
        <dbReference type="ChEBI" id="CHEBI:57292"/>
    </ligand>
</feature>
<feature type="binding site" description="in other chain" evidence="2">
    <location>
        <position position="332"/>
    </location>
    <ligand>
        <name>pyridoxal 5'-phosphate</name>
        <dbReference type="ChEBI" id="CHEBI:597326"/>
        <note>ligand shared between dimeric partners</note>
    </ligand>
</feature>
<feature type="binding site" description="in other chain" evidence="3">
    <location>
        <position position="360"/>
    </location>
    <ligand>
        <name>pyridoxal 5'-phosphate</name>
        <dbReference type="ChEBI" id="CHEBI:597326"/>
        <note>ligand shared between dimeric partners</note>
    </ligand>
</feature>
<feature type="binding site" description="in other chain" evidence="3">
    <location>
        <position position="388"/>
    </location>
    <ligand>
        <name>pyridoxal 5'-phosphate</name>
        <dbReference type="ChEBI" id="CHEBI:597326"/>
        <note>ligand shared between dimeric partners</note>
    </ligand>
</feature>
<feature type="binding site" evidence="3">
    <location>
        <position position="420"/>
    </location>
    <ligand>
        <name>pyridoxal 5'-phosphate</name>
        <dbReference type="ChEBI" id="CHEBI:597326"/>
        <note>ligand shared between dimeric partners</note>
    </ligand>
</feature>
<feature type="binding site" evidence="3">
    <location>
        <position position="421"/>
    </location>
    <ligand>
        <name>pyridoxal 5'-phosphate</name>
        <dbReference type="ChEBI" id="CHEBI:597326"/>
        <note>ligand shared between dimeric partners</note>
    </ligand>
</feature>
<feature type="binding site" evidence="2">
    <location>
        <position position="508"/>
    </location>
    <ligand>
        <name>succinyl-CoA</name>
        <dbReference type="ChEBI" id="CHEBI:57292"/>
    </ligand>
</feature>
<feature type="modified residue" description="N6-(pyridoxal phosphate)lysine" evidence="1">
    <location>
        <position position="391"/>
    </location>
</feature>
<organism>
    <name type="scientific">Pongo abelii</name>
    <name type="common">Sumatran orangutan</name>
    <name type="synonym">Pongo pygmaeus abelii</name>
    <dbReference type="NCBI Taxonomy" id="9601"/>
    <lineage>
        <taxon>Eukaryota</taxon>
        <taxon>Metazoa</taxon>
        <taxon>Chordata</taxon>
        <taxon>Craniata</taxon>
        <taxon>Vertebrata</taxon>
        <taxon>Euteleostomi</taxon>
        <taxon>Mammalia</taxon>
        <taxon>Eutheria</taxon>
        <taxon>Euarchontoglires</taxon>
        <taxon>Primates</taxon>
        <taxon>Haplorrhini</taxon>
        <taxon>Catarrhini</taxon>
        <taxon>Hominidae</taxon>
        <taxon>Pongo</taxon>
    </lineage>
</organism>
<comment type="function">
    <text evidence="3">Catalyzes the pyridoxal 5'-phosphate (PLP)-dependent condensation of succinyl-CoA and glycine to form aminolevulinic acid (ALA), with CoA and CO2 as by-products (By similarity). Contributes significantly to heme formation during erythropoiesis (By similarity).</text>
</comment>
<comment type="catalytic activity">
    <reaction evidence="3">
        <text>succinyl-CoA + glycine + H(+) = 5-aminolevulinate + CO2 + CoA</text>
        <dbReference type="Rhea" id="RHEA:12921"/>
        <dbReference type="ChEBI" id="CHEBI:15378"/>
        <dbReference type="ChEBI" id="CHEBI:16526"/>
        <dbReference type="ChEBI" id="CHEBI:57287"/>
        <dbReference type="ChEBI" id="CHEBI:57292"/>
        <dbReference type="ChEBI" id="CHEBI:57305"/>
        <dbReference type="ChEBI" id="CHEBI:356416"/>
        <dbReference type="EC" id="2.3.1.37"/>
    </reaction>
    <physiologicalReaction direction="left-to-right" evidence="3">
        <dbReference type="Rhea" id="RHEA:12922"/>
    </physiologicalReaction>
</comment>
<comment type="cofactor">
    <cofactor evidence="3">
        <name>pyridoxal 5'-phosphate</name>
        <dbReference type="ChEBI" id="CHEBI:597326"/>
    </cofactor>
</comment>
<comment type="pathway">
    <text evidence="3">Porphyrin-containing compound metabolism; protoporphyrin-IX biosynthesis; 5-aminolevulinate from glycine: step 1/1.</text>
</comment>
<comment type="subunit">
    <text evidence="3">Homodimer. Interacts with SUCLA2.</text>
</comment>
<comment type="subcellular location">
    <subcellularLocation>
        <location evidence="3">Mitochondrion inner membrane</location>
        <topology evidence="3">Peripheral membrane protein</topology>
    </subcellularLocation>
    <text evidence="3">Localizes to the matrix side of the mitochondrion inner membrane.</text>
</comment>
<comment type="domain">
    <text evidence="3">C-terminus is a mobile self-inhibitory loop which interferes directly with active site.</text>
</comment>
<comment type="similarity">
    <text evidence="4">Belongs to the class-II pyridoxal-phosphate-dependent aminotransferase family.</text>
</comment>
<evidence type="ECO:0000250" key="1">
    <source>
        <dbReference type="UniProtKB" id="P08680"/>
    </source>
</evidence>
<evidence type="ECO:0000250" key="2">
    <source>
        <dbReference type="UniProtKB" id="P18079"/>
    </source>
</evidence>
<evidence type="ECO:0000250" key="3">
    <source>
        <dbReference type="UniProtKB" id="P22557"/>
    </source>
</evidence>
<evidence type="ECO:0000305" key="4"/>
<sequence>MVTAAMLLQCCPVPARGPTSLLGKVVKTHQFLFGIGRCPILATQGPNCSQIHLKATKAGGDSPSWAKGHCPFMLSELQDGKSKIVQKAAPEVQEDVKAFKTDLPSSLVSASLKKPFSSPQEQEQISGKVTHLIQDNMPGNYVFSYDQFFRDKIMEKKQDHTYRVFKTVNRWADAYPFAQHFSEASVASKDVSVWCSNDYLGMSRHPQVLRATQETLQRHGAGAGGTRNISGTSKFHVELEQELAELHQKDSALLFSSCFVANDSTLFTLAKILPGCEIYSDAGNHASMIQGIRNSGAAKFVFRHNDPDHLKKLLEKSNPKIPKIVAFEAVHSMDGAICPLEELCDVSHQYGALTFVDEVHAVGLYGSRGAGIGERDGIMHKIDIISGTLGKAFGCVGGYIASTRDLVDMVRSYAAGFIFTTSLPPMVLSGALESVRLLKGEEGQALRRAHQRNVKHMRQLLMDRGLPVIPCPSHIIPIRVGNAALNSKLCDLLLSKHGIYVQAINYPTVPRGEELLRLAPSPHHSPQMMEDFVEKLLLAWTEVGLPLQDVSVAACNFCRRPVHFELMSEWERSYFGNMGPQYVTTYA</sequence>
<accession>Q5R557</accession>
<proteinExistence type="evidence at transcript level"/>
<dbReference type="EC" id="2.3.1.37" evidence="3"/>
<dbReference type="EMBL" id="CR861013">
    <property type="protein sequence ID" value="CAH93109.1"/>
    <property type="molecule type" value="mRNA"/>
</dbReference>
<dbReference type="RefSeq" id="NP_001127630.1">
    <property type="nucleotide sequence ID" value="NM_001134158.1"/>
</dbReference>
<dbReference type="SMR" id="Q5R557"/>
<dbReference type="FunCoup" id="Q5R557">
    <property type="interactions" value="689"/>
</dbReference>
<dbReference type="STRING" id="9601.ENSPPYP00000022824"/>
<dbReference type="GeneID" id="100174709"/>
<dbReference type="KEGG" id="pon:100174709"/>
<dbReference type="CTD" id="212"/>
<dbReference type="eggNOG" id="KOG1360">
    <property type="taxonomic scope" value="Eukaryota"/>
</dbReference>
<dbReference type="InParanoid" id="Q5R557"/>
<dbReference type="OrthoDB" id="10263824at2759"/>
<dbReference type="UniPathway" id="UPA00251">
    <property type="reaction ID" value="UER00375"/>
</dbReference>
<dbReference type="Proteomes" id="UP000001595">
    <property type="component" value="Unplaced"/>
</dbReference>
<dbReference type="GO" id="GO:0005743">
    <property type="term" value="C:mitochondrial inner membrane"/>
    <property type="evidence" value="ECO:0000250"/>
    <property type="project" value="UniProtKB"/>
</dbReference>
<dbReference type="GO" id="GO:0005759">
    <property type="term" value="C:mitochondrial matrix"/>
    <property type="evidence" value="ECO:0007669"/>
    <property type="project" value="InterPro"/>
</dbReference>
<dbReference type="GO" id="GO:0003870">
    <property type="term" value="F:5-aminolevulinate synthase activity"/>
    <property type="evidence" value="ECO:0000250"/>
    <property type="project" value="UniProtKB"/>
</dbReference>
<dbReference type="GO" id="GO:0030170">
    <property type="term" value="F:pyridoxal phosphate binding"/>
    <property type="evidence" value="ECO:0007669"/>
    <property type="project" value="InterPro"/>
</dbReference>
<dbReference type="GO" id="GO:0048821">
    <property type="term" value="P:erythrocyte development"/>
    <property type="evidence" value="ECO:0007669"/>
    <property type="project" value="TreeGrafter"/>
</dbReference>
<dbReference type="GO" id="GO:0042541">
    <property type="term" value="P:hemoglobin biosynthetic process"/>
    <property type="evidence" value="ECO:0007669"/>
    <property type="project" value="TreeGrafter"/>
</dbReference>
<dbReference type="GO" id="GO:0006782">
    <property type="term" value="P:protoporphyrinogen IX biosynthetic process"/>
    <property type="evidence" value="ECO:0007669"/>
    <property type="project" value="UniProtKB-UniPathway"/>
</dbReference>
<dbReference type="GO" id="GO:0001666">
    <property type="term" value="P:response to hypoxia"/>
    <property type="evidence" value="ECO:0000250"/>
    <property type="project" value="UniProtKB"/>
</dbReference>
<dbReference type="CDD" id="cd06454">
    <property type="entry name" value="KBL_like"/>
    <property type="match status" value="1"/>
</dbReference>
<dbReference type="FunFam" id="3.90.1150.10:FF:000029">
    <property type="entry name" value="5-aminolevulinate synthase"/>
    <property type="match status" value="1"/>
</dbReference>
<dbReference type="FunFam" id="4.10.92.10:FF:000001">
    <property type="entry name" value="5-aminolevulinate synthase"/>
    <property type="match status" value="1"/>
</dbReference>
<dbReference type="FunFam" id="3.40.640.10:FF:000006">
    <property type="entry name" value="5-aminolevulinate synthase, mitochondrial"/>
    <property type="match status" value="1"/>
</dbReference>
<dbReference type="Gene3D" id="4.10.92.10">
    <property type="entry name" value="Aminolevulinic Acid Synthase 2"/>
    <property type="match status" value="1"/>
</dbReference>
<dbReference type="Gene3D" id="3.90.1150.10">
    <property type="entry name" value="Aspartate Aminotransferase, domain 1"/>
    <property type="match status" value="1"/>
</dbReference>
<dbReference type="Gene3D" id="3.40.640.10">
    <property type="entry name" value="Type I PLP-dependent aspartate aminotransferase-like (Major domain)"/>
    <property type="match status" value="1"/>
</dbReference>
<dbReference type="InterPro" id="IPR010961">
    <property type="entry name" value="4pyrrol_synth_NH2levulA_synth"/>
</dbReference>
<dbReference type="InterPro" id="IPR015118">
    <property type="entry name" value="5aminolev_synth_preseq"/>
</dbReference>
<dbReference type="InterPro" id="IPR001917">
    <property type="entry name" value="Aminotrans_II_pyridoxalP_BS"/>
</dbReference>
<dbReference type="InterPro" id="IPR004839">
    <property type="entry name" value="Aminotransferase_I/II_large"/>
</dbReference>
<dbReference type="InterPro" id="IPR050087">
    <property type="entry name" value="AON_synthase_class-II"/>
</dbReference>
<dbReference type="InterPro" id="IPR015424">
    <property type="entry name" value="PyrdxlP-dep_Trfase"/>
</dbReference>
<dbReference type="InterPro" id="IPR015421">
    <property type="entry name" value="PyrdxlP-dep_Trfase_major"/>
</dbReference>
<dbReference type="InterPro" id="IPR015422">
    <property type="entry name" value="PyrdxlP-dep_Trfase_small"/>
</dbReference>
<dbReference type="NCBIfam" id="TIGR01821">
    <property type="entry name" value="5aminolev_synth"/>
    <property type="match status" value="1"/>
</dbReference>
<dbReference type="PANTHER" id="PTHR13693:SF58">
    <property type="entry name" value="5-AMINOLEVULINATE SYNTHASE, ERYTHROID-SPECIFIC, MITOCHONDRIAL"/>
    <property type="match status" value="1"/>
</dbReference>
<dbReference type="PANTHER" id="PTHR13693">
    <property type="entry name" value="CLASS II AMINOTRANSFERASE/8-AMINO-7-OXONONANOATE SYNTHASE"/>
    <property type="match status" value="1"/>
</dbReference>
<dbReference type="Pfam" id="PF00155">
    <property type="entry name" value="Aminotran_1_2"/>
    <property type="match status" value="1"/>
</dbReference>
<dbReference type="Pfam" id="PF09029">
    <property type="entry name" value="Preseq_ALAS"/>
    <property type="match status" value="1"/>
</dbReference>
<dbReference type="SUPFAM" id="SSF53383">
    <property type="entry name" value="PLP-dependent transferases"/>
    <property type="match status" value="1"/>
</dbReference>
<dbReference type="PROSITE" id="PS00599">
    <property type="entry name" value="AA_TRANSFER_CLASS_2"/>
    <property type="match status" value="1"/>
</dbReference>
<protein>
    <recommendedName>
        <fullName>5-aminolevulinate synthase, erythroid-specific, mitochondrial</fullName>
        <shortName>ALAS-E</shortName>
        <ecNumber evidence="3">2.3.1.37</ecNumber>
    </recommendedName>
    <alternativeName>
        <fullName>5-aminolevulinic acid synthase 2</fullName>
    </alternativeName>
    <alternativeName>
        <fullName>Delta-ALA synthase 2</fullName>
    </alternativeName>
    <alternativeName>
        <fullName>Delta-aminolevulinate synthase 2</fullName>
    </alternativeName>
</protein>
<reference key="1">
    <citation type="submission" date="2004-11" db="EMBL/GenBank/DDBJ databases">
        <authorList>
            <consortium name="The German cDNA consortium"/>
        </authorList>
    </citation>
    <scope>NUCLEOTIDE SEQUENCE [LARGE SCALE MRNA]</scope>
    <source>
        <tissue>Brain cortex</tissue>
    </source>
</reference>
<gene>
    <name type="primary">ALAS2</name>
</gene>